<proteinExistence type="inferred from homology"/>
<accession>Q48E61</accession>
<dbReference type="EMBL" id="CP000058">
    <property type="protein sequence ID" value="AAZ34960.1"/>
    <property type="molecule type" value="Genomic_DNA"/>
</dbReference>
<dbReference type="RefSeq" id="WP_011169457.1">
    <property type="nucleotide sequence ID" value="NC_005773.3"/>
</dbReference>
<dbReference type="SMR" id="Q48E61"/>
<dbReference type="KEGG" id="psp:PSPPH_4207"/>
<dbReference type="eggNOG" id="COG0576">
    <property type="taxonomic scope" value="Bacteria"/>
</dbReference>
<dbReference type="HOGENOM" id="CLU_057217_6_0_6"/>
<dbReference type="Proteomes" id="UP000000551">
    <property type="component" value="Chromosome"/>
</dbReference>
<dbReference type="GO" id="GO:0005829">
    <property type="term" value="C:cytosol"/>
    <property type="evidence" value="ECO:0007669"/>
    <property type="project" value="TreeGrafter"/>
</dbReference>
<dbReference type="GO" id="GO:0000774">
    <property type="term" value="F:adenyl-nucleotide exchange factor activity"/>
    <property type="evidence" value="ECO:0007669"/>
    <property type="project" value="InterPro"/>
</dbReference>
<dbReference type="GO" id="GO:0042803">
    <property type="term" value="F:protein homodimerization activity"/>
    <property type="evidence" value="ECO:0007669"/>
    <property type="project" value="InterPro"/>
</dbReference>
<dbReference type="GO" id="GO:0051087">
    <property type="term" value="F:protein-folding chaperone binding"/>
    <property type="evidence" value="ECO:0007669"/>
    <property type="project" value="InterPro"/>
</dbReference>
<dbReference type="GO" id="GO:0051082">
    <property type="term" value="F:unfolded protein binding"/>
    <property type="evidence" value="ECO:0007669"/>
    <property type="project" value="TreeGrafter"/>
</dbReference>
<dbReference type="GO" id="GO:0006457">
    <property type="term" value="P:protein folding"/>
    <property type="evidence" value="ECO:0007669"/>
    <property type="project" value="InterPro"/>
</dbReference>
<dbReference type="CDD" id="cd00446">
    <property type="entry name" value="GrpE"/>
    <property type="match status" value="1"/>
</dbReference>
<dbReference type="FunFam" id="2.30.22.10:FF:000001">
    <property type="entry name" value="Protein GrpE"/>
    <property type="match status" value="1"/>
</dbReference>
<dbReference type="Gene3D" id="3.90.20.20">
    <property type="match status" value="1"/>
</dbReference>
<dbReference type="Gene3D" id="2.30.22.10">
    <property type="entry name" value="Head domain of nucleotide exchange factor GrpE"/>
    <property type="match status" value="1"/>
</dbReference>
<dbReference type="HAMAP" id="MF_01151">
    <property type="entry name" value="GrpE"/>
    <property type="match status" value="1"/>
</dbReference>
<dbReference type="InterPro" id="IPR000740">
    <property type="entry name" value="GrpE"/>
</dbReference>
<dbReference type="InterPro" id="IPR013805">
    <property type="entry name" value="GrpE_coiled_coil"/>
</dbReference>
<dbReference type="InterPro" id="IPR009012">
    <property type="entry name" value="GrpE_head"/>
</dbReference>
<dbReference type="NCBIfam" id="NF010737">
    <property type="entry name" value="PRK14139.1"/>
    <property type="match status" value="1"/>
</dbReference>
<dbReference type="NCBIfam" id="NF010738">
    <property type="entry name" value="PRK14140.1"/>
    <property type="match status" value="1"/>
</dbReference>
<dbReference type="NCBIfam" id="NF010748">
    <property type="entry name" value="PRK14150.1"/>
    <property type="match status" value="1"/>
</dbReference>
<dbReference type="NCBIfam" id="NF010749">
    <property type="entry name" value="PRK14151.1"/>
    <property type="match status" value="1"/>
</dbReference>
<dbReference type="PANTHER" id="PTHR21237">
    <property type="entry name" value="GRPE PROTEIN"/>
    <property type="match status" value="1"/>
</dbReference>
<dbReference type="PANTHER" id="PTHR21237:SF23">
    <property type="entry name" value="GRPE PROTEIN HOMOLOG, MITOCHONDRIAL"/>
    <property type="match status" value="1"/>
</dbReference>
<dbReference type="Pfam" id="PF01025">
    <property type="entry name" value="GrpE"/>
    <property type="match status" value="1"/>
</dbReference>
<dbReference type="PRINTS" id="PR00773">
    <property type="entry name" value="GRPEPROTEIN"/>
</dbReference>
<dbReference type="SUPFAM" id="SSF58014">
    <property type="entry name" value="Coiled-coil domain of nucleotide exchange factor GrpE"/>
    <property type="match status" value="1"/>
</dbReference>
<dbReference type="SUPFAM" id="SSF51064">
    <property type="entry name" value="Head domain of nucleotide exchange factor GrpE"/>
    <property type="match status" value="1"/>
</dbReference>
<dbReference type="PROSITE" id="PS01071">
    <property type="entry name" value="GRPE"/>
    <property type="match status" value="1"/>
</dbReference>
<keyword id="KW-0143">Chaperone</keyword>
<keyword id="KW-0963">Cytoplasm</keyword>
<keyword id="KW-0346">Stress response</keyword>
<comment type="function">
    <text evidence="1">Participates actively in the response to hyperosmotic and heat shock by preventing the aggregation of stress-denatured proteins, in association with DnaK and GrpE. It is the nucleotide exchange factor for DnaK and may function as a thermosensor. Unfolded proteins bind initially to DnaJ; upon interaction with the DnaJ-bound protein, DnaK hydrolyzes its bound ATP, resulting in the formation of a stable complex. GrpE releases ADP from DnaK; ATP binding to DnaK triggers the release of the substrate protein, thus completing the reaction cycle. Several rounds of ATP-dependent interactions between DnaJ, DnaK and GrpE are required for fully efficient folding.</text>
</comment>
<comment type="subunit">
    <text evidence="1">Homodimer.</text>
</comment>
<comment type="subcellular location">
    <subcellularLocation>
        <location evidence="1">Cytoplasm</location>
    </subcellularLocation>
</comment>
<comment type="similarity">
    <text evidence="1">Belongs to the GrpE family.</text>
</comment>
<feature type="chain" id="PRO_1000053619" description="Protein GrpE">
    <location>
        <begin position="1"/>
        <end position="187"/>
    </location>
</feature>
<feature type="region of interest" description="Disordered" evidence="2">
    <location>
        <begin position="1"/>
        <end position="23"/>
    </location>
</feature>
<feature type="compositionally biased region" description="Low complexity" evidence="2">
    <location>
        <begin position="7"/>
        <end position="23"/>
    </location>
</feature>
<name>GRPE_PSE14</name>
<evidence type="ECO:0000255" key="1">
    <source>
        <dbReference type="HAMAP-Rule" id="MF_01151"/>
    </source>
</evidence>
<evidence type="ECO:0000256" key="2">
    <source>
        <dbReference type="SAM" id="MobiDB-lite"/>
    </source>
</evidence>
<organism>
    <name type="scientific">Pseudomonas savastanoi pv. phaseolicola (strain 1448A / Race 6)</name>
    <name type="common">Pseudomonas syringae pv. phaseolicola (strain 1448A / Race 6)</name>
    <dbReference type="NCBI Taxonomy" id="264730"/>
    <lineage>
        <taxon>Bacteria</taxon>
        <taxon>Pseudomonadati</taxon>
        <taxon>Pseudomonadota</taxon>
        <taxon>Gammaproteobacteria</taxon>
        <taxon>Pseudomonadales</taxon>
        <taxon>Pseudomonadaceae</taxon>
        <taxon>Pseudomonas</taxon>
    </lineage>
</organism>
<sequence>MADEQNLDAQAQDQAAEAGAGEELTTRVQVLEEQLAAAQDQSLRVAADLQNVRRRAEQDVEKAHKFALEKFAGDLLPIIDSLERGLDLSNPDDESIRPMREGIELTLKMFQDTLKRYQLEAIDPYGQPFSADQHQAMAMQESADVEPNTVLKVFQKGYQLNGRLLRPAMVVVSKAPSPATPSINEQA</sequence>
<protein>
    <recommendedName>
        <fullName evidence="1">Protein GrpE</fullName>
    </recommendedName>
    <alternativeName>
        <fullName evidence="1">HSP-70 cofactor</fullName>
    </alternativeName>
</protein>
<reference key="1">
    <citation type="journal article" date="2005" name="J. Bacteriol.">
        <title>Whole-genome sequence analysis of Pseudomonas syringae pv. phaseolicola 1448A reveals divergence among pathovars in genes involved in virulence and transposition.</title>
        <authorList>
            <person name="Joardar V."/>
            <person name="Lindeberg M."/>
            <person name="Jackson R.W."/>
            <person name="Selengut J."/>
            <person name="Dodson R."/>
            <person name="Brinkac L.M."/>
            <person name="Daugherty S.C."/>
            <person name="DeBoy R.T."/>
            <person name="Durkin A.S."/>
            <person name="Gwinn Giglio M."/>
            <person name="Madupu R."/>
            <person name="Nelson W.C."/>
            <person name="Rosovitz M.J."/>
            <person name="Sullivan S.A."/>
            <person name="Crabtree J."/>
            <person name="Creasy T."/>
            <person name="Davidsen T.M."/>
            <person name="Haft D.H."/>
            <person name="Zafar N."/>
            <person name="Zhou L."/>
            <person name="Halpin R."/>
            <person name="Holley T."/>
            <person name="Khouri H.M."/>
            <person name="Feldblyum T.V."/>
            <person name="White O."/>
            <person name="Fraser C.M."/>
            <person name="Chatterjee A.K."/>
            <person name="Cartinhour S."/>
            <person name="Schneider D."/>
            <person name="Mansfield J.W."/>
            <person name="Collmer A."/>
            <person name="Buell R."/>
        </authorList>
    </citation>
    <scope>NUCLEOTIDE SEQUENCE [LARGE SCALE GENOMIC DNA]</scope>
    <source>
        <strain>1448A / Race 6</strain>
    </source>
</reference>
<gene>
    <name evidence="1" type="primary">grpE</name>
    <name type="ordered locus">PSPPH_4207</name>
</gene>